<protein>
    <recommendedName>
        <fullName evidence="1">Succinate dehydrogenase assembly factor 3, mitochondrial</fullName>
        <shortName evidence="1">SDH assembly factor 3</shortName>
        <shortName evidence="1">SDHAF3</shortName>
    </recommendedName>
    <alternativeName>
        <fullName evidence="5">Acetate non-utilizing protein 17</fullName>
    </alternativeName>
</protein>
<comment type="function">
    <text evidence="1 2">Plays an essential role in the assembly of succinate dehydrogenase (SDH), an enzyme complex (also referred to as respiratory complex II) that is a component of both the tricarboxylic acid (TCA) cycle and the mitochondrial electron transport chain, and which couples the oxidation of succinate to fumarate with the reduction of ubiquinone (coenzyme Q) to ubiquinol. Promotes maturation of the iron-sulfur protein subunit of the SDH catalytic dimer, protecting it from the deleterious effects of oxidants. May act together with SDHAF1.</text>
</comment>
<comment type="subunit">
    <text evidence="1">Interacts with the iron-sulfur protein subunit within the SDH catalytic dimer.</text>
</comment>
<comment type="subcellular location">
    <subcellularLocation>
        <location evidence="1">Mitochondrion matrix</location>
    </subcellularLocation>
</comment>
<comment type="similarity">
    <text evidence="5">Belongs to the complex I LYR family. SDHAF3 subfamily.</text>
</comment>
<gene>
    <name evidence="5" type="primary">acu-17</name>
    <name type="ORF">B23L4.040</name>
    <name type="ORF">NCU09255</name>
</gene>
<organism>
    <name type="scientific">Neurospora crassa (strain ATCC 24698 / 74-OR23-1A / CBS 708.71 / DSM 1257 / FGSC 987)</name>
    <dbReference type="NCBI Taxonomy" id="367110"/>
    <lineage>
        <taxon>Eukaryota</taxon>
        <taxon>Fungi</taxon>
        <taxon>Dikarya</taxon>
        <taxon>Ascomycota</taxon>
        <taxon>Pezizomycotina</taxon>
        <taxon>Sordariomycetes</taxon>
        <taxon>Sordariomycetidae</taxon>
        <taxon>Sordariales</taxon>
        <taxon>Sordariaceae</taxon>
        <taxon>Neurospora</taxon>
    </lineage>
</organism>
<reference key="1">
    <citation type="journal article" date="2003" name="Nucleic Acids Res.">
        <title>What's in the genome of a filamentous fungus? Analysis of the Neurospora genome sequence.</title>
        <authorList>
            <person name="Mannhaupt G."/>
            <person name="Montrone C."/>
            <person name="Haase D."/>
            <person name="Mewes H.-W."/>
            <person name="Aign V."/>
            <person name="Hoheisel J.D."/>
            <person name="Fartmann B."/>
            <person name="Nyakatura G."/>
            <person name="Kempken F."/>
            <person name="Maier J."/>
            <person name="Schulte U."/>
        </authorList>
    </citation>
    <scope>NUCLEOTIDE SEQUENCE [LARGE SCALE GENOMIC DNA]</scope>
    <source>
        <strain>ATCC 24698 / 74-OR23-1A / CBS 708.71 / DSM 1257 / FGSC 987</strain>
    </source>
</reference>
<reference key="2">
    <citation type="journal article" date="2003" name="Nature">
        <title>The genome sequence of the filamentous fungus Neurospora crassa.</title>
        <authorList>
            <person name="Galagan J.E."/>
            <person name="Calvo S.E."/>
            <person name="Borkovich K.A."/>
            <person name="Selker E.U."/>
            <person name="Read N.D."/>
            <person name="Jaffe D.B."/>
            <person name="FitzHugh W."/>
            <person name="Ma L.-J."/>
            <person name="Smirnov S."/>
            <person name="Purcell S."/>
            <person name="Rehman B."/>
            <person name="Elkins T."/>
            <person name="Engels R."/>
            <person name="Wang S."/>
            <person name="Nielsen C.B."/>
            <person name="Butler J."/>
            <person name="Endrizzi M."/>
            <person name="Qui D."/>
            <person name="Ianakiev P."/>
            <person name="Bell-Pedersen D."/>
            <person name="Nelson M.A."/>
            <person name="Werner-Washburne M."/>
            <person name="Selitrennikoff C.P."/>
            <person name="Kinsey J.A."/>
            <person name="Braun E.L."/>
            <person name="Zelter A."/>
            <person name="Schulte U."/>
            <person name="Kothe G.O."/>
            <person name="Jedd G."/>
            <person name="Mewes H.-W."/>
            <person name="Staben C."/>
            <person name="Marcotte E."/>
            <person name="Greenberg D."/>
            <person name="Roy A."/>
            <person name="Foley K."/>
            <person name="Naylor J."/>
            <person name="Stange-Thomann N."/>
            <person name="Barrett R."/>
            <person name="Gnerre S."/>
            <person name="Kamal M."/>
            <person name="Kamvysselis M."/>
            <person name="Mauceli E.W."/>
            <person name="Bielke C."/>
            <person name="Rudd S."/>
            <person name="Frishman D."/>
            <person name="Krystofova S."/>
            <person name="Rasmussen C."/>
            <person name="Metzenberg R.L."/>
            <person name="Perkins D.D."/>
            <person name="Kroken S."/>
            <person name="Cogoni C."/>
            <person name="Macino G."/>
            <person name="Catcheside D.E.A."/>
            <person name="Li W."/>
            <person name="Pratt R.J."/>
            <person name="Osmani S.A."/>
            <person name="DeSouza C.P.C."/>
            <person name="Glass N.L."/>
            <person name="Orbach M.J."/>
            <person name="Berglund J.A."/>
            <person name="Voelker R."/>
            <person name="Yarden O."/>
            <person name="Plamann M."/>
            <person name="Seiler S."/>
            <person name="Dunlap J.C."/>
            <person name="Radford A."/>
            <person name="Aramayo R."/>
            <person name="Natvig D.O."/>
            <person name="Alex L.A."/>
            <person name="Mannhaupt G."/>
            <person name="Ebbole D.J."/>
            <person name="Freitag M."/>
            <person name="Paulsen I."/>
            <person name="Sachs M.S."/>
            <person name="Lander E.S."/>
            <person name="Nusbaum C."/>
            <person name="Birren B.W."/>
        </authorList>
    </citation>
    <scope>NUCLEOTIDE SEQUENCE [LARGE SCALE GENOMIC DNA]</scope>
    <source>
        <strain>ATCC 24698 / 74-OR23-1A / CBS 708.71 / DSM 1257 / FGSC 987</strain>
    </source>
</reference>
<accession>Q7SF55</accession>
<dbReference type="EMBL" id="CM002236">
    <property type="protein sequence ID" value="EAA35454.1"/>
    <property type="molecule type" value="Genomic_DNA"/>
</dbReference>
<dbReference type="EMBL" id="BX842628">
    <property type="protein sequence ID" value="CAE76306.1"/>
    <property type="molecule type" value="Genomic_DNA"/>
</dbReference>
<dbReference type="RefSeq" id="XP_964690.1">
    <property type="nucleotide sequence ID" value="XM_959597.2"/>
</dbReference>
<dbReference type="SMR" id="Q7SF55"/>
<dbReference type="FunCoup" id="Q7SF55">
    <property type="interactions" value="255"/>
</dbReference>
<dbReference type="STRING" id="367110.Q7SF55"/>
<dbReference type="PaxDb" id="5141-EFNCRP00000009061"/>
<dbReference type="EnsemblFungi" id="EAA35454">
    <property type="protein sequence ID" value="EAA35454"/>
    <property type="gene ID" value="NCU09255"/>
</dbReference>
<dbReference type="GeneID" id="3880839"/>
<dbReference type="KEGG" id="ncr:NCU09255"/>
<dbReference type="VEuPathDB" id="FungiDB:NCU09255"/>
<dbReference type="HOGENOM" id="CLU_102310_1_0_1"/>
<dbReference type="InParanoid" id="Q7SF55"/>
<dbReference type="OMA" id="KRHKNCN"/>
<dbReference type="OrthoDB" id="278329at2759"/>
<dbReference type="Proteomes" id="UP000001805">
    <property type="component" value="Chromosome 1, Linkage Group I"/>
</dbReference>
<dbReference type="GO" id="GO:0005758">
    <property type="term" value="C:mitochondrial intermembrane space"/>
    <property type="evidence" value="ECO:0000318"/>
    <property type="project" value="GO_Central"/>
</dbReference>
<dbReference type="GO" id="GO:0005759">
    <property type="term" value="C:mitochondrial matrix"/>
    <property type="evidence" value="ECO:0007669"/>
    <property type="project" value="UniProtKB-SubCell"/>
</dbReference>
<dbReference type="GO" id="GO:0006094">
    <property type="term" value="P:gluconeogenesis"/>
    <property type="evidence" value="ECO:0007669"/>
    <property type="project" value="UniProtKB-KW"/>
</dbReference>
<dbReference type="GO" id="GO:0034553">
    <property type="term" value="P:mitochondrial respiratory chain complex II assembly"/>
    <property type="evidence" value="ECO:0000318"/>
    <property type="project" value="GO_Central"/>
</dbReference>
<dbReference type="GO" id="GO:0006105">
    <property type="term" value="P:succinate metabolic process"/>
    <property type="evidence" value="ECO:0000318"/>
    <property type="project" value="GO_Central"/>
</dbReference>
<dbReference type="CDD" id="cd20270">
    <property type="entry name" value="Complex1_LYR_SDHAF3_LYRM10"/>
    <property type="match status" value="1"/>
</dbReference>
<dbReference type="InterPro" id="IPR008381">
    <property type="entry name" value="SDHAF3/Sdh7"/>
</dbReference>
<dbReference type="PANTHER" id="PTHR13137">
    <property type="entry name" value="DC11 ACN9 HOMOLOG"/>
    <property type="match status" value="1"/>
</dbReference>
<dbReference type="PANTHER" id="PTHR13137:SF6">
    <property type="entry name" value="SUCCINATE DEHYDROGENASE ASSEMBLY FACTOR 3, MITOCHONDRIAL"/>
    <property type="match status" value="1"/>
</dbReference>
<dbReference type="Pfam" id="PF13233">
    <property type="entry name" value="Complex1_LYR_2"/>
    <property type="match status" value="1"/>
</dbReference>
<name>SDHF3_NEUCR</name>
<keyword id="KW-0143">Chaperone</keyword>
<keyword id="KW-0312">Gluconeogenesis</keyword>
<keyword id="KW-0496">Mitochondrion</keyword>
<keyword id="KW-1185">Reference proteome</keyword>
<keyword id="KW-0809">Transit peptide</keyword>
<evidence type="ECO:0000250" key="1">
    <source>
        <dbReference type="UniProtKB" id="Q04401"/>
    </source>
</evidence>
<evidence type="ECO:0000250" key="2">
    <source>
        <dbReference type="UniProtKB" id="Q8SZ16"/>
    </source>
</evidence>
<evidence type="ECO:0000255" key="3"/>
<evidence type="ECO:0000256" key="4">
    <source>
        <dbReference type="SAM" id="MobiDB-lite"/>
    </source>
</evidence>
<evidence type="ECO:0000305" key="5"/>
<sequence length="148" mass="16883">MYALRPTLRRSAAAALTHSKNHNYGMTPGPLALLPPIYLYRRLLRAHRKYLPREMRLLGDEYVKAEFRAHRSVDNPAHLIGFLTEWQLYAQKIEGNSWVGEKLDKGKVEKMSDEQIGQLYELMQAIQKRGTEGDLEDGDGGESGQKSQ</sequence>
<feature type="transit peptide" description="Mitochondrion" evidence="3">
    <location>
        <begin position="1"/>
        <end position="12"/>
    </location>
</feature>
<feature type="chain" id="PRO_0000042750" description="Succinate dehydrogenase assembly factor 3, mitochondrial">
    <location>
        <begin position="13"/>
        <end position="148"/>
    </location>
</feature>
<feature type="region of interest" description="Disordered" evidence="4">
    <location>
        <begin position="129"/>
        <end position="148"/>
    </location>
</feature>
<proteinExistence type="inferred from homology"/>